<sequence>MNKTNQLINICILVTLFLIGSSSALTLQVEPKSQECFYNFIESGKTSLLLYQVIRGGLLDINVKLTDPKGNTIFERLHFDTQMKGKQSFTAGESGAYKVCFNNEMSRFTAKVVTFTWASEEEGVKEVAKGDSITPMDQSVQKIERVLQSVIHEQKKLRYREQANRDTSESTNARVVWWTIAEVIVLVVMGVGQIWYLRKWFDNKSTGRV</sequence>
<gene>
    <name type="primary">empB</name>
    <name type="ORF">DDB_G0293540</name>
</gene>
<protein>
    <recommendedName>
        <fullName>Transmembrane emp24 domain-containing protein B</fullName>
    </recommendedName>
</protein>
<comment type="function">
    <text evidence="1">Could have a role in the budding of coatomer-coated and other species of coated vesicles.</text>
</comment>
<comment type="subcellular location">
    <subcellularLocation>
        <location evidence="1">Cytoplasmic vesicle membrane</location>
        <topology evidence="1">Single-pass type I membrane protein</topology>
    </subcellularLocation>
</comment>
<comment type="similarity">
    <text evidence="4">Belongs to the EMP24/GP25L family.</text>
</comment>
<keyword id="KW-0968">Cytoplasmic vesicle</keyword>
<keyword id="KW-0472">Membrane</keyword>
<keyword id="KW-0653">Protein transport</keyword>
<keyword id="KW-1185">Reference proteome</keyword>
<keyword id="KW-0732">Signal</keyword>
<keyword id="KW-0812">Transmembrane</keyword>
<keyword id="KW-1133">Transmembrane helix</keyword>
<keyword id="KW-0813">Transport</keyword>
<name>TMEDB_DICDI</name>
<dbReference type="EMBL" id="AB112542">
    <property type="protein sequence ID" value="BAD05161.1"/>
    <property type="molecule type" value="Genomic_DNA"/>
</dbReference>
<dbReference type="EMBL" id="AAFI02000218">
    <property type="protein sequence ID" value="EAL60582.1"/>
    <property type="molecule type" value="Genomic_DNA"/>
</dbReference>
<dbReference type="RefSeq" id="XP_628999.1">
    <property type="nucleotide sequence ID" value="XM_628997.1"/>
</dbReference>
<dbReference type="SMR" id="Q54BN0"/>
<dbReference type="FunCoup" id="Q54BN0">
    <property type="interactions" value="163"/>
</dbReference>
<dbReference type="STRING" id="44689.Q54BN0"/>
<dbReference type="PaxDb" id="44689-DDB0215389"/>
<dbReference type="EnsemblProtists" id="EAL60582">
    <property type="protein sequence ID" value="EAL60582"/>
    <property type="gene ID" value="DDB_G0293540"/>
</dbReference>
<dbReference type="GeneID" id="8629283"/>
<dbReference type="KEGG" id="ddi:DDB_G0293540"/>
<dbReference type="dictyBase" id="DDB_G0293540">
    <property type="gene designation" value="empB"/>
</dbReference>
<dbReference type="VEuPathDB" id="AmoebaDB:DDB_G0293540"/>
<dbReference type="eggNOG" id="KOG1692">
    <property type="taxonomic scope" value="Eukaryota"/>
</dbReference>
<dbReference type="HOGENOM" id="CLU_066963_4_1_1"/>
<dbReference type="InParanoid" id="Q54BN0"/>
<dbReference type="OMA" id="VGEYTFC"/>
<dbReference type="PhylomeDB" id="Q54BN0"/>
<dbReference type="Reactome" id="R-DDI-6807878">
    <property type="pathway name" value="COPI-mediated anterograde transport"/>
</dbReference>
<dbReference type="Reactome" id="R-DDI-6811434">
    <property type="pathway name" value="COPI-dependent Golgi-to-ER retrograde traffic"/>
</dbReference>
<dbReference type="PRO" id="PR:Q54BN0"/>
<dbReference type="Proteomes" id="UP000002195">
    <property type="component" value="Chromosome 6"/>
</dbReference>
<dbReference type="GO" id="GO:0030134">
    <property type="term" value="C:COPII-coated ER to Golgi transport vesicle"/>
    <property type="evidence" value="ECO:0000318"/>
    <property type="project" value="GO_Central"/>
</dbReference>
<dbReference type="GO" id="GO:0030659">
    <property type="term" value="C:cytoplasmic vesicle membrane"/>
    <property type="evidence" value="ECO:0007669"/>
    <property type="project" value="UniProtKB-SubCell"/>
</dbReference>
<dbReference type="GO" id="GO:0005783">
    <property type="term" value="C:endoplasmic reticulum"/>
    <property type="evidence" value="ECO:0000318"/>
    <property type="project" value="GO_Central"/>
</dbReference>
<dbReference type="GO" id="GO:0005793">
    <property type="term" value="C:endoplasmic reticulum-Golgi intermediate compartment"/>
    <property type="evidence" value="ECO:0000318"/>
    <property type="project" value="GO_Central"/>
</dbReference>
<dbReference type="GO" id="GO:0005794">
    <property type="term" value="C:Golgi apparatus"/>
    <property type="evidence" value="ECO:0000318"/>
    <property type="project" value="GO_Central"/>
</dbReference>
<dbReference type="GO" id="GO:0006888">
    <property type="term" value="P:endoplasmic reticulum to Golgi vesicle-mediated transport"/>
    <property type="evidence" value="ECO:0000318"/>
    <property type="project" value="GO_Central"/>
</dbReference>
<dbReference type="GO" id="GO:0007030">
    <property type="term" value="P:Golgi organization"/>
    <property type="evidence" value="ECO:0000318"/>
    <property type="project" value="GO_Central"/>
</dbReference>
<dbReference type="GO" id="GO:0006886">
    <property type="term" value="P:intracellular protein transport"/>
    <property type="evidence" value="ECO:0000318"/>
    <property type="project" value="GO_Central"/>
</dbReference>
<dbReference type="InterPro" id="IPR015720">
    <property type="entry name" value="Emp24-like"/>
</dbReference>
<dbReference type="InterPro" id="IPR009038">
    <property type="entry name" value="GOLD_dom"/>
</dbReference>
<dbReference type="InterPro" id="IPR036598">
    <property type="entry name" value="GOLD_dom_sf"/>
</dbReference>
<dbReference type="PANTHER" id="PTHR22811">
    <property type="entry name" value="TRANSMEMBRANE EMP24 DOMAIN-CONTAINING PROTEIN"/>
    <property type="match status" value="1"/>
</dbReference>
<dbReference type="Pfam" id="PF01105">
    <property type="entry name" value="EMP24_GP25L"/>
    <property type="match status" value="1"/>
</dbReference>
<dbReference type="SMART" id="SM01190">
    <property type="entry name" value="EMP24_GP25L"/>
    <property type="match status" value="1"/>
</dbReference>
<dbReference type="SUPFAM" id="SSF101576">
    <property type="entry name" value="Supernatant protein factor (SPF), C-terminal domain"/>
    <property type="match status" value="1"/>
</dbReference>
<dbReference type="PROSITE" id="PS50866">
    <property type="entry name" value="GOLD"/>
    <property type="match status" value="1"/>
</dbReference>
<proteinExistence type="inferred from homology"/>
<organism>
    <name type="scientific">Dictyostelium discoideum</name>
    <name type="common">Social amoeba</name>
    <dbReference type="NCBI Taxonomy" id="44689"/>
    <lineage>
        <taxon>Eukaryota</taxon>
        <taxon>Amoebozoa</taxon>
        <taxon>Evosea</taxon>
        <taxon>Eumycetozoa</taxon>
        <taxon>Dictyostelia</taxon>
        <taxon>Dictyosteliales</taxon>
        <taxon>Dictyosteliaceae</taxon>
        <taxon>Dictyostelium</taxon>
    </lineage>
</organism>
<reference key="1">
    <citation type="submission" date="2003-06" db="EMBL/GenBank/DDBJ databases">
        <title>Regulation of development by Ddp24 genes, a family of genes involved in COPI/II-coated vesicle trafficking.</title>
        <authorList>
            <person name="Morio T."/>
            <person name="Kuwabara Y."/>
            <person name="Sawayama M."/>
            <person name="Kuwayama H."/>
            <person name="Kawabae Y."/>
            <person name="Tanaka Y."/>
        </authorList>
    </citation>
    <scope>NUCLEOTIDE SEQUENCE [GENOMIC DNA]</scope>
    <source>
        <strain>AX4</strain>
    </source>
</reference>
<reference key="2">
    <citation type="journal article" date="2005" name="Nature">
        <title>The genome of the social amoeba Dictyostelium discoideum.</title>
        <authorList>
            <person name="Eichinger L."/>
            <person name="Pachebat J.A."/>
            <person name="Gloeckner G."/>
            <person name="Rajandream M.A."/>
            <person name="Sucgang R."/>
            <person name="Berriman M."/>
            <person name="Song J."/>
            <person name="Olsen R."/>
            <person name="Szafranski K."/>
            <person name="Xu Q."/>
            <person name="Tunggal B."/>
            <person name="Kummerfeld S."/>
            <person name="Madera M."/>
            <person name="Konfortov B.A."/>
            <person name="Rivero F."/>
            <person name="Bankier A.T."/>
            <person name="Lehmann R."/>
            <person name="Hamlin N."/>
            <person name="Davies R."/>
            <person name="Gaudet P."/>
            <person name="Fey P."/>
            <person name="Pilcher K."/>
            <person name="Chen G."/>
            <person name="Saunders D."/>
            <person name="Sodergren E.J."/>
            <person name="Davis P."/>
            <person name="Kerhornou A."/>
            <person name="Nie X."/>
            <person name="Hall N."/>
            <person name="Anjard C."/>
            <person name="Hemphill L."/>
            <person name="Bason N."/>
            <person name="Farbrother P."/>
            <person name="Desany B."/>
            <person name="Just E."/>
            <person name="Morio T."/>
            <person name="Rost R."/>
            <person name="Churcher C.M."/>
            <person name="Cooper J."/>
            <person name="Haydock S."/>
            <person name="van Driessche N."/>
            <person name="Cronin A."/>
            <person name="Goodhead I."/>
            <person name="Muzny D.M."/>
            <person name="Mourier T."/>
            <person name="Pain A."/>
            <person name="Lu M."/>
            <person name="Harper D."/>
            <person name="Lindsay R."/>
            <person name="Hauser H."/>
            <person name="James K.D."/>
            <person name="Quiles M."/>
            <person name="Madan Babu M."/>
            <person name="Saito T."/>
            <person name="Buchrieser C."/>
            <person name="Wardroper A."/>
            <person name="Felder M."/>
            <person name="Thangavelu M."/>
            <person name="Johnson D."/>
            <person name="Knights A."/>
            <person name="Loulseged H."/>
            <person name="Mungall K.L."/>
            <person name="Oliver K."/>
            <person name="Price C."/>
            <person name="Quail M.A."/>
            <person name="Urushihara H."/>
            <person name="Hernandez J."/>
            <person name="Rabbinowitsch E."/>
            <person name="Steffen D."/>
            <person name="Sanders M."/>
            <person name="Ma J."/>
            <person name="Kohara Y."/>
            <person name="Sharp S."/>
            <person name="Simmonds M.N."/>
            <person name="Spiegler S."/>
            <person name="Tivey A."/>
            <person name="Sugano S."/>
            <person name="White B."/>
            <person name="Walker D."/>
            <person name="Woodward J.R."/>
            <person name="Winckler T."/>
            <person name="Tanaka Y."/>
            <person name="Shaulsky G."/>
            <person name="Schleicher M."/>
            <person name="Weinstock G.M."/>
            <person name="Rosenthal A."/>
            <person name="Cox E.C."/>
            <person name="Chisholm R.L."/>
            <person name="Gibbs R.A."/>
            <person name="Loomis W.F."/>
            <person name="Platzer M."/>
            <person name="Kay R.R."/>
            <person name="Williams J.G."/>
            <person name="Dear P.H."/>
            <person name="Noegel A.A."/>
            <person name="Barrell B.G."/>
            <person name="Kuspa A."/>
        </authorList>
    </citation>
    <scope>NUCLEOTIDE SEQUENCE [LARGE SCALE GENOMIC DNA]</scope>
    <source>
        <strain>AX4</strain>
    </source>
</reference>
<accession>Q54BN0</accession>
<accession>Q769F8</accession>
<feature type="signal peptide" evidence="2">
    <location>
        <begin position="1"/>
        <end position="24"/>
    </location>
</feature>
<feature type="chain" id="PRO_0000342023" description="Transmembrane emp24 domain-containing protein B">
    <location>
        <begin position="25"/>
        <end position="209"/>
    </location>
</feature>
<feature type="topological domain" description="Lumenal" evidence="2">
    <location>
        <begin position="25"/>
        <end position="174"/>
    </location>
</feature>
<feature type="transmembrane region" description="Helical" evidence="2">
    <location>
        <begin position="175"/>
        <end position="195"/>
    </location>
</feature>
<feature type="topological domain" description="Cytoplasmic" evidence="2">
    <location>
        <begin position="196"/>
        <end position="209"/>
    </location>
</feature>
<feature type="domain" description="GOLD" evidence="3">
    <location>
        <begin position="34"/>
        <end position="119"/>
    </location>
</feature>
<feature type="sequence conflict" description="In Ref. 1; BAD05161." evidence="4" ref="1">
    <original>N</original>
    <variation>D</variation>
    <location>
        <position position="2"/>
    </location>
</feature>
<evidence type="ECO:0000250" key="1"/>
<evidence type="ECO:0000255" key="2"/>
<evidence type="ECO:0000255" key="3">
    <source>
        <dbReference type="PROSITE-ProRule" id="PRU00096"/>
    </source>
</evidence>
<evidence type="ECO:0000305" key="4"/>